<reference key="1">
    <citation type="submission" date="2005-08" db="EMBL/GenBank/DDBJ databases">
        <authorList>
            <consortium name="NIH - Mammalian Gene Collection (MGC) project"/>
        </authorList>
    </citation>
    <scope>NUCLEOTIDE SEQUENCE [LARGE SCALE MRNA]</scope>
    <source>
        <strain>Hereford</strain>
        <tissue>Fetal liver</tissue>
    </source>
</reference>
<organism>
    <name type="scientific">Bos taurus</name>
    <name type="common">Bovine</name>
    <dbReference type="NCBI Taxonomy" id="9913"/>
    <lineage>
        <taxon>Eukaryota</taxon>
        <taxon>Metazoa</taxon>
        <taxon>Chordata</taxon>
        <taxon>Craniata</taxon>
        <taxon>Vertebrata</taxon>
        <taxon>Euteleostomi</taxon>
        <taxon>Mammalia</taxon>
        <taxon>Eutheria</taxon>
        <taxon>Laurasiatheria</taxon>
        <taxon>Artiodactyla</taxon>
        <taxon>Ruminantia</taxon>
        <taxon>Pecora</taxon>
        <taxon>Bovidae</taxon>
        <taxon>Bovinae</taxon>
        <taxon>Bos</taxon>
    </lineage>
</organism>
<sequence>MAPVVTGKFGERPPPKRLTREAMRNYLKERGDQTVLILHAKVAQKSYGNEKRFFCPPPCVYLMGSGWKKKKEQMERDGCSEQESQPCAFIGIGNSDQEMQQLNLEGKNYCTAKTLYISDSDKRKHFMLSVKMFYGNSDDIGVFLSKRIKVISKPSKKKQSLKNADLCIASGTKVALFNRLRSQTVSTRYLHVEGGNFHASSQQWGAFYIHLLDDDESEGEEFTVRDGYIHYGQTVKLVCSVTGMALPRLIIRKVDKQTALLDADDPVSQLHKCAFYLKDTERMYLCLSQERIIQFQATPCPKEPNKEMINDGASWTIISTDKAEYTFYEGMGPVLAPVTPVPVVESLQLNGGGDVAMLELTGQNFTPNLRVWFGDVEAETMYRCGESMLCVVPDISAFREGWRWVRQPVQVPVTLVRNDGIIYSTSLTFTYTPEPGPRPHCSAAGAILRANSSQVPPNESNTNSEGSYTNVSTNSTSVTSSTATVVS</sequence>
<gene>
    <name type="primary">RBPJ</name>
    <name type="synonym">RBPSUH</name>
</gene>
<proteinExistence type="evidence at transcript level"/>
<keyword id="KW-0007">Acetylation</keyword>
<keyword id="KW-0010">Activator</keyword>
<keyword id="KW-0963">Cytoplasm</keyword>
<keyword id="KW-0238">DNA-binding</keyword>
<keyword id="KW-0914">Notch signaling pathway</keyword>
<keyword id="KW-0539">Nucleus</keyword>
<keyword id="KW-1185">Reference proteome</keyword>
<keyword id="KW-0677">Repeat</keyword>
<keyword id="KW-0678">Repressor</keyword>
<keyword id="KW-0804">Transcription</keyword>
<keyword id="KW-0805">Transcription regulation</keyword>
<accession>Q3SZ41</accession>
<protein>
    <recommendedName>
        <fullName>Recombining binding protein suppressor of hairless</fullName>
    </recommendedName>
    <alternativeName>
        <fullName>J kappa-recombination signal-binding protein</fullName>
    </alternativeName>
    <alternativeName>
        <fullName>RBP-J kappa</fullName>
    </alternativeName>
</protein>
<dbReference type="EMBL" id="BC103164">
    <property type="protein sequence ID" value="AAI03165.1"/>
    <property type="molecule type" value="mRNA"/>
</dbReference>
<dbReference type="RefSeq" id="NP_001070469.1">
    <property type="nucleotide sequence ID" value="NM_001077001.2"/>
</dbReference>
<dbReference type="SMR" id="Q3SZ41"/>
<dbReference type="FunCoup" id="Q3SZ41">
    <property type="interactions" value="3937"/>
</dbReference>
<dbReference type="STRING" id="9913.ENSBTAP00000004696"/>
<dbReference type="PaxDb" id="9913-ENSBTAP00000004696"/>
<dbReference type="GeneID" id="767928"/>
<dbReference type="KEGG" id="bta:767928"/>
<dbReference type="CTD" id="3516"/>
<dbReference type="VEuPathDB" id="HostDB:ENSBTAG00000003602"/>
<dbReference type="eggNOG" id="KOG3743">
    <property type="taxonomic scope" value="Eukaryota"/>
</dbReference>
<dbReference type="HOGENOM" id="CLU_022207_2_1_1"/>
<dbReference type="InParanoid" id="Q3SZ41"/>
<dbReference type="OMA" id="QRQDMPH"/>
<dbReference type="OrthoDB" id="5600360at2759"/>
<dbReference type="TreeFam" id="TF314117"/>
<dbReference type="Reactome" id="R-BTA-350054">
    <property type="pathway name" value="Notch-HLH transcription pathway"/>
</dbReference>
<dbReference type="Reactome" id="R-BTA-8941856">
    <property type="pathway name" value="RUNX3 regulates NOTCH signaling"/>
</dbReference>
<dbReference type="Proteomes" id="UP000009136">
    <property type="component" value="Chromosome 6"/>
</dbReference>
<dbReference type="Bgee" id="ENSBTAG00000003602">
    <property type="expression patterns" value="Expressed in milk and 109 other cell types or tissues"/>
</dbReference>
<dbReference type="GO" id="GO:0005737">
    <property type="term" value="C:cytoplasm"/>
    <property type="evidence" value="ECO:0000250"/>
    <property type="project" value="UniProtKB"/>
</dbReference>
<dbReference type="GO" id="GO:0002193">
    <property type="term" value="C:MAML1-RBP-Jkappa- ICN1 complex"/>
    <property type="evidence" value="ECO:0000318"/>
    <property type="project" value="GO_Central"/>
</dbReference>
<dbReference type="GO" id="GO:0005634">
    <property type="term" value="C:nucleus"/>
    <property type="evidence" value="ECO:0000250"/>
    <property type="project" value="UniProtKB"/>
</dbReference>
<dbReference type="GO" id="GO:0001228">
    <property type="term" value="F:DNA-binding transcription activator activity, RNA polymerase II-specific"/>
    <property type="evidence" value="ECO:0007669"/>
    <property type="project" value="InterPro"/>
</dbReference>
<dbReference type="GO" id="GO:0000981">
    <property type="term" value="F:DNA-binding transcription factor activity, RNA polymerase II-specific"/>
    <property type="evidence" value="ECO:0000318"/>
    <property type="project" value="GO_Central"/>
</dbReference>
<dbReference type="GO" id="GO:0140297">
    <property type="term" value="F:DNA-binding transcription factor binding"/>
    <property type="evidence" value="ECO:0000250"/>
    <property type="project" value="UniProtKB"/>
</dbReference>
<dbReference type="GO" id="GO:0000978">
    <property type="term" value="F:RNA polymerase II cis-regulatory region sequence-specific DNA binding"/>
    <property type="evidence" value="ECO:0000318"/>
    <property type="project" value="GO_Central"/>
</dbReference>
<dbReference type="GO" id="GO:0043565">
    <property type="term" value="F:sequence-specific DNA binding"/>
    <property type="evidence" value="ECO:0000250"/>
    <property type="project" value="UniProtKB"/>
</dbReference>
<dbReference type="GO" id="GO:0007219">
    <property type="term" value="P:Notch signaling pathway"/>
    <property type="evidence" value="ECO:0000318"/>
    <property type="project" value="GO_Central"/>
</dbReference>
<dbReference type="GO" id="GO:0045944">
    <property type="term" value="P:positive regulation of transcription by RNA polymerase II"/>
    <property type="evidence" value="ECO:0000250"/>
    <property type="project" value="UniProtKB"/>
</dbReference>
<dbReference type="GO" id="GO:0007221">
    <property type="term" value="P:positive regulation of transcription of Notch receptor target"/>
    <property type="evidence" value="ECO:0000250"/>
    <property type="project" value="UniProtKB"/>
</dbReference>
<dbReference type="CDD" id="cd01176">
    <property type="entry name" value="IPT_RBP-Jkappa"/>
    <property type="match status" value="1"/>
</dbReference>
<dbReference type="FunFam" id="2.60.40.1450:FF:000001">
    <property type="entry name" value="Recombining binding protein suppressor of hairless"/>
    <property type="match status" value="1"/>
</dbReference>
<dbReference type="FunFam" id="2.80.10.50:FF:000003">
    <property type="entry name" value="recombining binding protein suppressor of hairless"/>
    <property type="match status" value="1"/>
</dbReference>
<dbReference type="FunFam" id="2.60.40.10:FF:000074">
    <property type="entry name" value="Recombining binding protein suppressor of hairless, putative"/>
    <property type="match status" value="1"/>
</dbReference>
<dbReference type="Gene3D" id="2.80.10.50">
    <property type="match status" value="1"/>
</dbReference>
<dbReference type="Gene3D" id="2.60.40.10">
    <property type="entry name" value="Immunoglobulins"/>
    <property type="match status" value="1"/>
</dbReference>
<dbReference type="Gene3D" id="2.60.40.1450">
    <property type="entry name" value="LAG1, DNA binding domain"/>
    <property type="match status" value="1"/>
</dbReference>
<dbReference type="InterPro" id="IPR015350">
    <property type="entry name" value="Beta-trefoil_DNA-bd_dom"/>
</dbReference>
<dbReference type="InterPro" id="IPR036358">
    <property type="entry name" value="BTD_sf"/>
</dbReference>
<dbReference type="InterPro" id="IPR040159">
    <property type="entry name" value="CLS_fam"/>
</dbReference>
<dbReference type="InterPro" id="IPR013783">
    <property type="entry name" value="Ig-like_fold"/>
</dbReference>
<dbReference type="InterPro" id="IPR014756">
    <property type="entry name" value="Ig_E-set"/>
</dbReference>
<dbReference type="InterPro" id="IPR008967">
    <property type="entry name" value="p53-like_TF_DNA-bd_sf"/>
</dbReference>
<dbReference type="InterPro" id="IPR015351">
    <property type="entry name" value="RBP-J/Cbf11/Cbf12_DNA-bd"/>
</dbReference>
<dbReference type="InterPro" id="IPR037095">
    <property type="entry name" value="RBP-J/Cbf11_DNA-bd_sf"/>
</dbReference>
<dbReference type="InterPro" id="IPR038007">
    <property type="entry name" value="RBP-Jkappa_IPT"/>
</dbReference>
<dbReference type="PANTHER" id="PTHR10665">
    <property type="entry name" value="RECOMBINING BINDING PROTEIN SUPPRESSOR OF HAIRLESS"/>
    <property type="match status" value="1"/>
</dbReference>
<dbReference type="Pfam" id="PF09270">
    <property type="entry name" value="BTD"/>
    <property type="match status" value="1"/>
</dbReference>
<dbReference type="Pfam" id="PF09271">
    <property type="entry name" value="LAG1-DNAbind"/>
    <property type="match status" value="1"/>
</dbReference>
<dbReference type="Pfam" id="PF20144">
    <property type="entry name" value="TIG_SUH"/>
    <property type="match status" value="1"/>
</dbReference>
<dbReference type="SMART" id="SM01268">
    <property type="entry name" value="BTD"/>
    <property type="match status" value="1"/>
</dbReference>
<dbReference type="SMART" id="SM01267">
    <property type="entry name" value="LAG1_DNAbind"/>
    <property type="match status" value="1"/>
</dbReference>
<dbReference type="SUPFAM" id="SSF110217">
    <property type="entry name" value="DNA-binding protein LAG-1 (CSL)"/>
    <property type="match status" value="1"/>
</dbReference>
<dbReference type="SUPFAM" id="SSF81296">
    <property type="entry name" value="E set domains"/>
    <property type="match status" value="1"/>
</dbReference>
<dbReference type="SUPFAM" id="SSF49417">
    <property type="entry name" value="p53-like transcription factors"/>
    <property type="match status" value="1"/>
</dbReference>
<evidence type="ECO:0000250" key="1"/>
<evidence type="ECO:0000250" key="2">
    <source>
        <dbReference type="UniProtKB" id="P31266"/>
    </source>
</evidence>
<evidence type="ECO:0000250" key="3">
    <source>
        <dbReference type="UniProtKB" id="Q06330"/>
    </source>
</evidence>
<evidence type="ECO:0000256" key="4">
    <source>
        <dbReference type="SAM" id="MobiDB-lite"/>
    </source>
</evidence>
<evidence type="ECO:0000305" key="5"/>
<name>SUH_BOVIN</name>
<comment type="function">
    <text evidence="2 3">Transcriptional regulator that plays a central role in Notch signaling, a signaling pathway involved in cell-cell communication that regulates a broad spectrum of cell-fate determinations. Acts as a transcriptional repressor when it is not associated with Notch proteins. When associated with some NICD product of Notch proteins (Notch intracellular domain), it acts as a transcriptional activator that activates transcription of Notch target genes. Probably represses or activates transcription via the recruitment of chromatin remodeling complexes containing histone deacetylase or histone acetylase proteins, respectively. Specifically binds to the immunoglobulin kappa-type J segment recombination signal sequence. Binds specifically to methylated DNA. Binds to the oxygen responsive element of COX4I2 and activates its transcription under hypoxia conditions (4% oxygen). Negatively regulates the phagocyte oxidative burst in response to bacterial infection by repressing transcription of NADPH oxidase subunits (By similarity).</text>
</comment>
<comment type="subunit">
    <text evidence="2 3">Interacts with activated NOTCH1, NOTCH2 or NOTCH3. Interacts with MINT/SHARP. This interaction may mediate the recruitment of large corepressor complexes containing proteins such as HDAC1, HDAC2, NCOR2, SAP30, FHL1/KYOT2 and CIR1. Interacts with EP300, MAML1 and PTF1A. Interacts with RITA1, leading to nuclear export, prevent the interaction between RBPJ and NICD product and subsequent down-regulation of the Notch signaling pathway. Interacts with SNW1. Interacts with CHCHD2 and CXXC5. Interacts with BEND6 (via BEN domain). Interacts with NKAPL. Interacts with ZMIZ1. Interacts with RBM15. Interacts with L3MBTL3 and KDM1A; the interaction with KDM1A is weaker in the absence of L3MBTL3 and the interaction with L3MBTL3 is impaired by Notch-derived peptides containing the intracellular domain (NICD) (By similarity).</text>
</comment>
<comment type="subcellular location">
    <subcellularLocation>
        <location evidence="1">Nucleus</location>
    </subcellularLocation>
    <subcellularLocation>
        <location evidence="1">Cytoplasm</location>
    </subcellularLocation>
    <text evidence="1">Mainly nuclear, upon interaction with RITA1, translocates to the cytoplasm, down-regulating the Notch signaling pathway.</text>
</comment>
<comment type="similarity">
    <text evidence="5">Belongs to the Su(H) family.</text>
</comment>
<feature type="chain" id="PRO_0000260076" description="Recombining binding protein suppressor of hairless">
    <location>
        <begin position="1"/>
        <end position="487"/>
    </location>
</feature>
<feature type="domain" description="IPT/TIG">
    <location>
        <begin position="342"/>
        <end position="432"/>
    </location>
</feature>
<feature type="region of interest" description="DNA-binding" evidence="3">
    <location>
        <begin position="44"/>
        <end position="54"/>
    </location>
</feature>
<feature type="region of interest" description="DNA-binding" evidence="3">
    <location>
        <begin position="152"/>
        <end position="157"/>
    </location>
</feature>
<feature type="region of interest" description="DNA-binding" evidence="3">
    <location>
        <begin position="179"/>
        <end position="184"/>
    </location>
</feature>
<feature type="region of interest" description="Disordered" evidence="4">
    <location>
        <begin position="452"/>
        <end position="487"/>
    </location>
</feature>
<feature type="compositionally biased region" description="Polar residues" evidence="4">
    <location>
        <begin position="452"/>
        <end position="468"/>
    </location>
</feature>
<feature type="compositionally biased region" description="Low complexity" evidence="4">
    <location>
        <begin position="469"/>
        <end position="487"/>
    </location>
</feature>
<feature type="modified residue" description="N6-acetyllysine" evidence="2">
    <location>
        <position position="162"/>
    </location>
</feature>